<dbReference type="EMBL" id="U23556">
    <property type="protein sequence ID" value="AAB50501.1"/>
    <property type="molecule type" value="Genomic_DNA"/>
</dbReference>
<dbReference type="EMBL" id="X82307">
    <property type="protein sequence ID" value="CAA57750.1"/>
    <property type="molecule type" value="Genomic_DNA"/>
</dbReference>
<dbReference type="EMBL" id="U34265">
    <property type="protein sequence ID" value="AAA80507.1"/>
    <property type="molecule type" value="Genomic_DNA"/>
</dbReference>
<dbReference type="EMBL" id="U34267">
    <property type="protein sequence ID" value="AAA80509.1"/>
    <property type="molecule type" value="Genomic_DNA"/>
</dbReference>
<dbReference type="SMR" id="Q36194"/>
<dbReference type="Proteomes" id="UP000291022">
    <property type="component" value="Unassembled WGS sequence"/>
</dbReference>
<dbReference type="GO" id="GO:0005743">
    <property type="term" value="C:mitochondrial inner membrane"/>
    <property type="evidence" value="ECO:0007669"/>
    <property type="project" value="UniProtKB-SubCell"/>
</dbReference>
<dbReference type="GO" id="GO:0045275">
    <property type="term" value="C:respiratory chain complex III"/>
    <property type="evidence" value="ECO:0007669"/>
    <property type="project" value="InterPro"/>
</dbReference>
<dbReference type="GO" id="GO:0046872">
    <property type="term" value="F:metal ion binding"/>
    <property type="evidence" value="ECO:0007669"/>
    <property type="project" value="UniProtKB-KW"/>
</dbReference>
<dbReference type="GO" id="GO:0008121">
    <property type="term" value="F:ubiquinol-cytochrome-c reductase activity"/>
    <property type="evidence" value="ECO:0007669"/>
    <property type="project" value="InterPro"/>
</dbReference>
<dbReference type="GO" id="GO:0006122">
    <property type="term" value="P:mitochondrial electron transport, ubiquinol to cytochrome c"/>
    <property type="evidence" value="ECO:0007669"/>
    <property type="project" value="TreeGrafter"/>
</dbReference>
<dbReference type="CDD" id="cd00290">
    <property type="entry name" value="cytochrome_b_C"/>
    <property type="match status" value="1"/>
</dbReference>
<dbReference type="CDD" id="cd00284">
    <property type="entry name" value="Cytochrome_b_N"/>
    <property type="match status" value="1"/>
</dbReference>
<dbReference type="FunFam" id="1.20.810.10:FF:000002">
    <property type="entry name" value="Cytochrome b"/>
    <property type="match status" value="1"/>
</dbReference>
<dbReference type="Gene3D" id="1.20.810.10">
    <property type="entry name" value="Cytochrome Bc1 Complex, Chain C"/>
    <property type="match status" value="1"/>
</dbReference>
<dbReference type="InterPro" id="IPR005798">
    <property type="entry name" value="Cyt_b/b6_C"/>
</dbReference>
<dbReference type="InterPro" id="IPR036150">
    <property type="entry name" value="Cyt_b/b6_C_sf"/>
</dbReference>
<dbReference type="InterPro" id="IPR005797">
    <property type="entry name" value="Cyt_b/b6_N"/>
</dbReference>
<dbReference type="InterPro" id="IPR027387">
    <property type="entry name" value="Cytb/b6-like_sf"/>
</dbReference>
<dbReference type="InterPro" id="IPR030689">
    <property type="entry name" value="Cytochrome_b"/>
</dbReference>
<dbReference type="InterPro" id="IPR048260">
    <property type="entry name" value="Cytochrome_b_C_euk/bac"/>
</dbReference>
<dbReference type="InterPro" id="IPR048259">
    <property type="entry name" value="Cytochrome_b_N_euk/bac"/>
</dbReference>
<dbReference type="InterPro" id="IPR016174">
    <property type="entry name" value="Di-haem_cyt_TM"/>
</dbReference>
<dbReference type="PANTHER" id="PTHR19271">
    <property type="entry name" value="CYTOCHROME B"/>
    <property type="match status" value="1"/>
</dbReference>
<dbReference type="PANTHER" id="PTHR19271:SF16">
    <property type="entry name" value="CYTOCHROME B"/>
    <property type="match status" value="1"/>
</dbReference>
<dbReference type="Pfam" id="PF00032">
    <property type="entry name" value="Cytochrom_B_C"/>
    <property type="match status" value="1"/>
</dbReference>
<dbReference type="Pfam" id="PF00033">
    <property type="entry name" value="Cytochrome_B"/>
    <property type="match status" value="1"/>
</dbReference>
<dbReference type="PIRSF" id="PIRSF038885">
    <property type="entry name" value="COB"/>
    <property type="match status" value="1"/>
</dbReference>
<dbReference type="SUPFAM" id="SSF81648">
    <property type="entry name" value="a domain/subunit of cytochrome bc1 complex (Ubiquinol-cytochrome c reductase)"/>
    <property type="match status" value="1"/>
</dbReference>
<dbReference type="SUPFAM" id="SSF81342">
    <property type="entry name" value="Transmembrane di-heme cytochromes"/>
    <property type="match status" value="1"/>
</dbReference>
<dbReference type="PROSITE" id="PS51003">
    <property type="entry name" value="CYTB_CTER"/>
    <property type="match status" value="1"/>
</dbReference>
<dbReference type="PROSITE" id="PS51002">
    <property type="entry name" value="CYTB_NTER"/>
    <property type="match status" value="1"/>
</dbReference>
<proteinExistence type="inferred from homology"/>
<gene>
    <name type="primary">MT-CYB</name>
    <name type="synonym">COB</name>
    <name type="synonym">CYTB</name>
    <name type="synonym">MTCYB</name>
</gene>
<accession>Q36194</accession>
<accession>Q36195</accession>
<accession>Q36196</accession>
<accession>Q36200</accession>
<reference key="1">
    <citation type="journal article" date="1996" name="Mol. Phylogenet. Evol.">
        <title>A phylogeny of the bears (Ursidae) inferred from complete sequences of three mitochondrial genes.</title>
        <authorList>
            <person name="Talbot S.L."/>
            <person name="Shields G.F."/>
        </authorList>
    </citation>
    <scope>NUCLEOTIDE SEQUENCE [GENOMIC DNA]</scope>
    <source>
        <tissue>Skeletal muscle</tissue>
    </source>
</reference>
<reference key="2">
    <citation type="journal article" date="1995" name="J. Mol. Evol.">
        <title>A molecular view of pinniped relationships with particular emphasis on the true seals.</title>
        <authorList>
            <person name="Arnason U."/>
            <person name="Bodin K."/>
            <person name="Gullberg A."/>
            <person name="Ledje C."/>
            <person name="Mouchaty S."/>
        </authorList>
    </citation>
    <scope>NUCLEOTIDE SEQUENCE [GENOMIC DNA]</scope>
</reference>
<reference key="3">
    <citation type="submission" date="1995-10" db="EMBL/GenBank/DDBJ databases">
        <authorList>
            <person name="Paetkau D."/>
            <person name="Strobeck C."/>
        </authorList>
    </citation>
    <scope>NUCLEOTIDE SEQUENCE [GENOMIC DNA] OF 341-379</scope>
    <source>
        <strain>Isolate 223</strain>
        <strain>Isolate 3</strain>
    </source>
</reference>
<keyword id="KW-0249">Electron transport</keyword>
<keyword id="KW-0349">Heme</keyword>
<keyword id="KW-0408">Iron</keyword>
<keyword id="KW-0472">Membrane</keyword>
<keyword id="KW-0479">Metal-binding</keyword>
<keyword id="KW-0496">Mitochondrion</keyword>
<keyword id="KW-0999">Mitochondrion inner membrane</keyword>
<keyword id="KW-1185">Reference proteome</keyword>
<keyword id="KW-0679">Respiratory chain</keyword>
<keyword id="KW-0812">Transmembrane</keyword>
<keyword id="KW-1133">Transmembrane helix</keyword>
<keyword id="KW-0813">Transport</keyword>
<keyword id="KW-0830">Ubiquinone</keyword>
<evidence type="ECO:0000250" key="1"/>
<evidence type="ECO:0000250" key="2">
    <source>
        <dbReference type="UniProtKB" id="P00157"/>
    </source>
</evidence>
<evidence type="ECO:0000255" key="3">
    <source>
        <dbReference type="PROSITE-ProRule" id="PRU00967"/>
    </source>
</evidence>
<evidence type="ECO:0000255" key="4">
    <source>
        <dbReference type="PROSITE-ProRule" id="PRU00968"/>
    </source>
</evidence>
<evidence type="ECO:0000305" key="5"/>
<geneLocation type="mitochondrion"/>
<sequence length="379" mass="42302">MTNIRKTHPLAKIINNSLIDLPAPSNISAWWNFGSLLGVCLVLQILTGLFLAMHYTSDTTTAFSSITHICRDVHYGWIIRYMHANGASMFFICLFMHVGRGLYYGSYLLSETWNIGIILLFTVMATAFMGYVLPWGQMSFWGATVITNLLSAIPYIGADLVEWIWGGFSVNKATLTRFFAFHFILPFIILTLAAVHLLFLHETGSNNPSGIPSDSDKIPFHPYYTIKDALGALLLILVLAALVLFSPDLLGDPDNYIPANPLSTPPHIKPEWYFLFAYAILRSIPNKLGGVLALIFSILILAIIPLLHTSKQRGMMFRPLSQCLFWLLAADLLTLTWIGGQPVEHPFIIIGQLASVLYFTILLVLMPIAGIIENNLSKW</sequence>
<comment type="function">
    <text evidence="2">Component of the ubiquinol-cytochrome c reductase complex (complex III or cytochrome b-c1 complex) that is part of the mitochondrial respiratory chain. The b-c1 complex mediates electron transfer from ubiquinol to cytochrome c. Contributes to the generation of a proton gradient across the mitochondrial membrane that is then used for ATP synthesis.</text>
</comment>
<comment type="cofactor">
    <cofactor evidence="2">
        <name>heme b</name>
        <dbReference type="ChEBI" id="CHEBI:60344"/>
    </cofactor>
    <text evidence="2">Binds 2 heme b groups non-covalently.</text>
</comment>
<comment type="subunit">
    <text evidence="2">The cytochrome bc1 complex contains 11 subunits: 3 respiratory subunits (MT-CYB, CYC1 and UQCRFS1), 2 core proteins (UQCRC1 and UQCRC2) and 6 low-molecular weight proteins (UQCRH/QCR6, UQCRB/QCR7, UQCRQ/QCR8, UQCR10/QCR9, UQCR11/QCR10 and a cleavage product of UQCRFS1). This cytochrome bc1 complex then forms a dimer.</text>
</comment>
<comment type="subcellular location">
    <subcellularLocation>
        <location evidence="2">Mitochondrion inner membrane</location>
        <topology evidence="2">Multi-pass membrane protein</topology>
    </subcellularLocation>
</comment>
<comment type="miscellaneous">
    <text evidence="1">Heme 1 (or BL or b562) is low-potential and absorbs at about 562 nm, and heme 2 (or BH or b566) is high-potential and absorbs at about 566 nm.</text>
</comment>
<comment type="similarity">
    <text evidence="3 4">Belongs to the cytochrome b family.</text>
</comment>
<comment type="caution">
    <text evidence="2">The full-length protein contains only eight transmembrane helices, not nine as predicted by bioinformatics tools.</text>
</comment>
<organism>
    <name type="scientific">Ursus americanus</name>
    <name type="common">American black bear</name>
    <name type="synonym">Euarctos americanus</name>
    <dbReference type="NCBI Taxonomy" id="9643"/>
    <lineage>
        <taxon>Eukaryota</taxon>
        <taxon>Metazoa</taxon>
        <taxon>Chordata</taxon>
        <taxon>Craniata</taxon>
        <taxon>Vertebrata</taxon>
        <taxon>Euteleostomi</taxon>
        <taxon>Mammalia</taxon>
        <taxon>Eutheria</taxon>
        <taxon>Laurasiatheria</taxon>
        <taxon>Carnivora</taxon>
        <taxon>Caniformia</taxon>
        <taxon>Ursidae</taxon>
        <taxon>Ursus</taxon>
    </lineage>
</organism>
<feature type="chain" id="PRO_0000061702" description="Cytochrome b">
    <location>
        <begin position="1"/>
        <end position="379"/>
    </location>
</feature>
<feature type="transmembrane region" description="Helical" evidence="2">
    <location>
        <begin position="33"/>
        <end position="53"/>
    </location>
</feature>
<feature type="transmembrane region" description="Helical" evidence="2">
    <location>
        <begin position="77"/>
        <end position="98"/>
    </location>
</feature>
<feature type="transmembrane region" description="Helical" evidence="2">
    <location>
        <begin position="113"/>
        <end position="133"/>
    </location>
</feature>
<feature type="transmembrane region" description="Helical" evidence="2">
    <location>
        <begin position="178"/>
        <end position="198"/>
    </location>
</feature>
<feature type="transmembrane region" description="Helical" evidence="2">
    <location>
        <begin position="226"/>
        <end position="246"/>
    </location>
</feature>
<feature type="transmembrane region" description="Helical" evidence="2">
    <location>
        <begin position="288"/>
        <end position="308"/>
    </location>
</feature>
<feature type="transmembrane region" description="Helical" evidence="2">
    <location>
        <begin position="320"/>
        <end position="340"/>
    </location>
</feature>
<feature type="transmembrane region" description="Helical" evidence="2">
    <location>
        <begin position="347"/>
        <end position="367"/>
    </location>
</feature>
<feature type="binding site" description="axial binding residue" evidence="2">
    <location>
        <position position="83"/>
    </location>
    <ligand>
        <name>heme b</name>
        <dbReference type="ChEBI" id="CHEBI:60344"/>
        <label>b562</label>
    </ligand>
    <ligandPart>
        <name>Fe</name>
        <dbReference type="ChEBI" id="CHEBI:18248"/>
    </ligandPart>
</feature>
<feature type="binding site" description="axial binding residue" evidence="2">
    <location>
        <position position="97"/>
    </location>
    <ligand>
        <name>heme b</name>
        <dbReference type="ChEBI" id="CHEBI:60344"/>
        <label>b566</label>
    </ligand>
    <ligandPart>
        <name>Fe</name>
        <dbReference type="ChEBI" id="CHEBI:18248"/>
    </ligandPart>
</feature>
<feature type="binding site" description="axial binding residue" evidence="2">
    <location>
        <position position="182"/>
    </location>
    <ligand>
        <name>heme b</name>
        <dbReference type="ChEBI" id="CHEBI:60344"/>
        <label>b562</label>
    </ligand>
    <ligandPart>
        <name>Fe</name>
        <dbReference type="ChEBI" id="CHEBI:18248"/>
    </ligandPart>
</feature>
<feature type="binding site" description="axial binding residue" evidence="2">
    <location>
        <position position="196"/>
    </location>
    <ligand>
        <name>heme b</name>
        <dbReference type="ChEBI" id="CHEBI:60344"/>
        <label>b566</label>
    </ligand>
    <ligandPart>
        <name>Fe</name>
        <dbReference type="ChEBI" id="CHEBI:18248"/>
    </ligandPart>
</feature>
<feature type="binding site" evidence="2">
    <location>
        <position position="201"/>
    </location>
    <ligand>
        <name>a ubiquinone</name>
        <dbReference type="ChEBI" id="CHEBI:16389"/>
    </ligand>
</feature>
<feature type="sequence variant" description="In strain: Isolate 3.">
    <original>V</original>
    <variation>I</variation>
    <location>
        <position position="356"/>
    </location>
</feature>
<feature type="sequence variant" description="In strain: Isolate 223.">
    <original>S</original>
    <variation>L</variation>
    <location>
        <position position="377"/>
    </location>
</feature>
<feature type="sequence conflict" description="In Ref. 2; CAA57750." evidence="5" ref="2">
    <original>A</original>
    <variation>P</variation>
    <location>
        <position position="232"/>
    </location>
</feature>
<protein>
    <recommendedName>
        <fullName>Cytochrome b</fullName>
    </recommendedName>
    <alternativeName>
        <fullName>Complex III subunit 3</fullName>
    </alternativeName>
    <alternativeName>
        <fullName>Complex III subunit III</fullName>
    </alternativeName>
    <alternativeName>
        <fullName>Cytochrome b-c1 complex subunit 3</fullName>
    </alternativeName>
    <alternativeName>
        <fullName>Ubiquinol-cytochrome-c reductase complex cytochrome b subunit</fullName>
    </alternativeName>
</protein>
<name>CYB_URSAM</name>